<name>MDTE_ECOL6</name>
<proteinExistence type="inferred from homology"/>
<sequence>MNRRRKLLIPLLFCGAMLTACDDKSAENAAAMTPEVGVVTLSPGSVNVLSELPGRTVPYEVAEIRPQVGGIIIKRNFIEGDKVNQGDSLYQIDPAPLQAELNSAKGSLAKALSTASNARITFNRQASLLKTNYVSRQDYDTARTQLNEAEANVTVAKAAVEQATINLQYANVTSPITGVSGKSSVTVGALVTANQADSLVTVQRLDPIYVDLTQSVQDFLRMKEEVASGQIKQVQGSTPVQLNLENGKRYGQTGTLKFSDPTVDETTGSVTLRAIFPNPNGDLLPGMYVTALVDEGSRQNVLLVPQEGVTHNAQGKATALILDKDDVVQLREIEASKAIGDQWVVTSGLQAGDRVIVSGLQRIRPGIKARAISSSQENASTESKQ</sequence>
<keyword id="KW-0046">Antibiotic resistance</keyword>
<keyword id="KW-0997">Cell inner membrane</keyword>
<keyword id="KW-1003">Cell membrane</keyword>
<keyword id="KW-0449">Lipoprotein</keyword>
<keyword id="KW-0472">Membrane</keyword>
<keyword id="KW-0564">Palmitate</keyword>
<keyword id="KW-1185">Reference proteome</keyword>
<keyword id="KW-0732">Signal</keyword>
<keyword id="KW-0813">Transport</keyword>
<feature type="signal peptide" evidence="2">
    <location>
        <begin position="1"/>
        <end position="20"/>
    </location>
</feature>
<feature type="chain" id="PRO_0000018710" description="Multidrug resistance protein MdtE">
    <location>
        <begin position="21"/>
        <end position="385"/>
    </location>
</feature>
<feature type="lipid moiety-binding region" description="N-palmitoyl cysteine" evidence="2">
    <location>
        <position position="21"/>
    </location>
</feature>
<feature type="lipid moiety-binding region" description="S-diacylglycerol cysteine" evidence="2">
    <location>
        <position position="21"/>
    </location>
</feature>
<comment type="function">
    <text evidence="1">Part of the tripartite efflux system MdtEF-TolC, which confers resistance to various compounds.</text>
</comment>
<comment type="subunit">
    <text evidence="1">Homotrimer. Part of the tripartite efflux system MdtEF-TolC, which is composed of an inner membrane transporter, MdtF, a membrane fusion protein, MdtE, and an outer membrane component, TolC. The complex forms a large protein conduit and can translocate molecules across both the inner and outer membranes (By similarity).</text>
</comment>
<comment type="subcellular location">
    <subcellularLocation>
        <location evidence="3">Cell inner membrane</location>
        <topology evidence="2">Lipid-anchor</topology>
    </subcellularLocation>
</comment>
<comment type="similarity">
    <text evidence="3">Belongs to the membrane fusion protein (MFP) (TC 8.A.1) family.</text>
</comment>
<organism>
    <name type="scientific">Escherichia coli O6:H1 (strain CFT073 / ATCC 700928 / UPEC)</name>
    <dbReference type="NCBI Taxonomy" id="199310"/>
    <lineage>
        <taxon>Bacteria</taxon>
        <taxon>Pseudomonadati</taxon>
        <taxon>Pseudomonadota</taxon>
        <taxon>Gammaproteobacteria</taxon>
        <taxon>Enterobacterales</taxon>
        <taxon>Enterobacteriaceae</taxon>
        <taxon>Escherichia</taxon>
    </lineage>
</organism>
<protein>
    <recommendedName>
        <fullName>Multidrug resistance protein MdtE</fullName>
    </recommendedName>
</protein>
<evidence type="ECO:0000250" key="1"/>
<evidence type="ECO:0000255" key="2">
    <source>
        <dbReference type="PROSITE-ProRule" id="PRU00303"/>
    </source>
</evidence>
<evidence type="ECO:0000305" key="3"/>
<reference key="1">
    <citation type="journal article" date="2002" name="Proc. Natl. Acad. Sci. U.S.A.">
        <title>Extensive mosaic structure revealed by the complete genome sequence of uropathogenic Escherichia coli.</title>
        <authorList>
            <person name="Welch R.A."/>
            <person name="Burland V."/>
            <person name="Plunkett G. III"/>
            <person name="Redford P."/>
            <person name="Roesch P."/>
            <person name="Rasko D."/>
            <person name="Buckles E.L."/>
            <person name="Liou S.-R."/>
            <person name="Boutin A."/>
            <person name="Hackett J."/>
            <person name="Stroud D."/>
            <person name="Mayhew G.F."/>
            <person name="Rose D.J."/>
            <person name="Zhou S."/>
            <person name="Schwartz D.C."/>
            <person name="Perna N.T."/>
            <person name="Mobley H.L.T."/>
            <person name="Donnenberg M.S."/>
            <person name="Blattner F.R."/>
        </authorList>
    </citation>
    <scope>NUCLEOTIDE SEQUENCE [LARGE SCALE GENOMIC DNA]</scope>
    <source>
        <strain>CFT073 / ATCC 700928 / UPEC</strain>
    </source>
</reference>
<accession>Q8CVL1</accession>
<dbReference type="EMBL" id="AE014075">
    <property type="protein sequence ID" value="AAN82760.1"/>
    <property type="molecule type" value="Genomic_DNA"/>
</dbReference>
<dbReference type="SMR" id="Q8CVL1"/>
<dbReference type="STRING" id="199310.c4324"/>
<dbReference type="KEGG" id="ecc:c4324"/>
<dbReference type="eggNOG" id="COG0845">
    <property type="taxonomic scope" value="Bacteria"/>
</dbReference>
<dbReference type="HOGENOM" id="CLU_018816_2_1_6"/>
<dbReference type="BioCyc" id="ECOL199310:C4324-MONOMER"/>
<dbReference type="Proteomes" id="UP000001410">
    <property type="component" value="Chromosome"/>
</dbReference>
<dbReference type="GO" id="GO:0005886">
    <property type="term" value="C:plasma membrane"/>
    <property type="evidence" value="ECO:0007669"/>
    <property type="project" value="UniProtKB-SubCell"/>
</dbReference>
<dbReference type="GO" id="GO:0022857">
    <property type="term" value="F:transmembrane transporter activity"/>
    <property type="evidence" value="ECO:0007669"/>
    <property type="project" value="InterPro"/>
</dbReference>
<dbReference type="GO" id="GO:0015721">
    <property type="term" value="P:bile acid and bile salt transport"/>
    <property type="evidence" value="ECO:0007669"/>
    <property type="project" value="TreeGrafter"/>
</dbReference>
<dbReference type="GO" id="GO:0046677">
    <property type="term" value="P:response to antibiotic"/>
    <property type="evidence" value="ECO:0007669"/>
    <property type="project" value="UniProtKB-KW"/>
</dbReference>
<dbReference type="GO" id="GO:0009636">
    <property type="term" value="P:response to toxic substance"/>
    <property type="evidence" value="ECO:0007669"/>
    <property type="project" value="UniProtKB-ARBA"/>
</dbReference>
<dbReference type="FunFam" id="2.40.420.20:FF:000001">
    <property type="entry name" value="Efflux RND transporter periplasmic adaptor subunit"/>
    <property type="match status" value="1"/>
</dbReference>
<dbReference type="FunFam" id="2.40.30.170:FF:000001">
    <property type="entry name" value="Multidrug resistance efflux transporter MdtE"/>
    <property type="match status" value="1"/>
</dbReference>
<dbReference type="Gene3D" id="2.40.30.170">
    <property type="match status" value="1"/>
</dbReference>
<dbReference type="Gene3D" id="2.40.420.20">
    <property type="match status" value="1"/>
</dbReference>
<dbReference type="Gene3D" id="2.40.50.100">
    <property type="match status" value="1"/>
</dbReference>
<dbReference type="Gene3D" id="1.10.287.470">
    <property type="entry name" value="Helix hairpin bin"/>
    <property type="match status" value="1"/>
</dbReference>
<dbReference type="InterPro" id="IPR043602">
    <property type="entry name" value="CusB-like_dom_1"/>
</dbReference>
<dbReference type="InterPro" id="IPR032317">
    <property type="entry name" value="CusB_D23"/>
</dbReference>
<dbReference type="InterPro" id="IPR051160">
    <property type="entry name" value="MFP_Efflux"/>
</dbReference>
<dbReference type="InterPro" id="IPR006143">
    <property type="entry name" value="RND_pump_MFP"/>
</dbReference>
<dbReference type="NCBIfam" id="NF007362">
    <property type="entry name" value="PRK09859.1"/>
    <property type="match status" value="1"/>
</dbReference>
<dbReference type="NCBIfam" id="TIGR01730">
    <property type="entry name" value="RND_mfp"/>
    <property type="match status" value="1"/>
</dbReference>
<dbReference type="PANTHER" id="PTHR30158">
    <property type="entry name" value="ACRA/E-RELATED COMPONENT OF DRUG EFFLUX TRANSPORTER"/>
    <property type="match status" value="1"/>
</dbReference>
<dbReference type="PANTHER" id="PTHR30158:SF3">
    <property type="entry name" value="MULTIDRUG EFFLUX PUMP SUBUNIT ACRA-RELATED"/>
    <property type="match status" value="1"/>
</dbReference>
<dbReference type="Pfam" id="PF00529">
    <property type="entry name" value="CusB_dom_1"/>
    <property type="match status" value="1"/>
</dbReference>
<dbReference type="Pfam" id="PF16576">
    <property type="entry name" value="HlyD_D23"/>
    <property type="match status" value="1"/>
</dbReference>
<dbReference type="SUPFAM" id="SSF111369">
    <property type="entry name" value="HlyD-like secretion proteins"/>
    <property type="match status" value="1"/>
</dbReference>
<dbReference type="PROSITE" id="PS51257">
    <property type="entry name" value="PROKAR_LIPOPROTEIN"/>
    <property type="match status" value="1"/>
</dbReference>
<gene>
    <name type="primary">mdtE</name>
    <name type="ordered locus">c4324</name>
</gene>